<evidence type="ECO:0000255" key="1">
    <source>
        <dbReference type="HAMAP-Rule" id="MF_00171"/>
    </source>
</evidence>
<feature type="chain" id="PRO_1000017066" description="tRNA pseudouridine synthase A">
    <location>
        <begin position="1"/>
        <end position="268"/>
    </location>
</feature>
<feature type="active site" description="Nucleophile" evidence="1">
    <location>
        <position position="52"/>
    </location>
</feature>
<feature type="binding site" evidence="1">
    <location>
        <position position="113"/>
    </location>
    <ligand>
        <name>substrate</name>
    </ligand>
</feature>
<protein>
    <recommendedName>
        <fullName evidence="1">tRNA pseudouridine synthase A</fullName>
        <ecNumber evidence="1">5.4.99.12</ecNumber>
    </recommendedName>
    <alternativeName>
        <fullName evidence="1">tRNA pseudouridine(38-40) synthase</fullName>
    </alternativeName>
    <alternativeName>
        <fullName evidence="1">tRNA pseudouridylate synthase I</fullName>
    </alternativeName>
    <alternativeName>
        <fullName evidence="1">tRNA-uridine isomerase I</fullName>
    </alternativeName>
</protein>
<organism>
    <name type="scientific">Chlamydia abortus (strain DSM 27085 / S26/3)</name>
    <name type="common">Chlamydophila abortus</name>
    <dbReference type="NCBI Taxonomy" id="218497"/>
    <lineage>
        <taxon>Bacteria</taxon>
        <taxon>Pseudomonadati</taxon>
        <taxon>Chlamydiota</taxon>
        <taxon>Chlamydiia</taxon>
        <taxon>Chlamydiales</taxon>
        <taxon>Chlamydiaceae</taxon>
        <taxon>Chlamydia/Chlamydophila group</taxon>
        <taxon>Chlamydia</taxon>
    </lineage>
</organism>
<accession>Q5L6V3</accession>
<sequence length="268" mass="30639">MTQVVILLAYQGTAYAGWQRQPNDLSIQEVIENSLAQVVGKRIPVTSSGRTDAEVHAFGQVAHFSQPDHPQFSQASSIKKMLNALLPKDIVIRDVVLGDDKFHSRFSAIAKEYRYVLTRSPKPLPWERYFAYYPRHHLKTDLMQEGAQYLLGTHDFASFANHGRDYTSTIRTLFNLDIVDHGETVTIICRGNGFLYKMVRNIVGSLLDISRGKYPPEYIQEILMQKNRRQGPPAAPSHALSLYHVCYPKPYHWFCTPECNINSLKEEK</sequence>
<dbReference type="EC" id="5.4.99.12" evidence="1"/>
<dbReference type="EMBL" id="CR848038">
    <property type="protein sequence ID" value="CAH63617.1"/>
    <property type="molecule type" value="Genomic_DNA"/>
</dbReference>
<dbReference type="RefSeq" id="WP_011096870.1">
    <property type="nucleotide sequence ID" value="NC_004552.2"/>
</dbReference>
<dbReference type="SMR" id="Q5L6V3"/>
<dbReference type="KEGG" id="cab:CAB159"/>
<dbReference type="eggNOG" id="COG0101">
    <property type="taxonomic scope" value="Bacteria"/>
</dbReference>
<dbReference type="HOGENOM" id="CLU_014673_0_1_0"/>
<dbReference type="OrthoDB" id="9811823at2"/>
<dbReference type="Proteomes" id="UP000001012">
    <property type="component" value="Chromosome"/>
</dbReference>
<dbReference type="GO" id="GO:0003723">
    <property type="term" value="F:RNA binding"/>
    <property type="evidence" value="ECO:0007669"/>
    <property type="project" value="InterPro"/>
</dbReference>
<dbReference type="GO" id="GO:0160147">
    <property type="term" value="F:tRNA pseudouridine(38-40) synthase activity"/>
    <property type="evidence" value="ECO:0007669"/>
    <property type="project" value="UniProtKB-EC"/>
</dbReference>
<dbReference type="GO" id="GO:0031119">
    <property type="term" value="P:tRNA pseudouridine synthesis"/>
    <property type="evidence" value="ECO:0007669"/>
    <property type="project" value="UniProtKB-UniRule"/>
</dbReference>
<dbReference type="CDD" id="cd02570">
    <property type="entry name" value="PseudoU_synth_EcTruA"/>
    <property type="match status" value="1"/>
</dbReference>
<dbReference type="FunFam" id="3.30.70.580:FF:000001">
    <property type="entry name" value="tRNA pseudouridine synthase A"/>
    <property type="match status" value="1"/>
</dbReference>
<dbReference type="Gene3D" id="3.30.70.660">
    <property type="entry name" value="Pseudouridine synthase I, catalytic domain, C-terminal subdomain"/>
    <property type="match status" value="1"/>
</dbReference>
<dbReference type="Gene3D" id="3.30.70.580">
    <property type="entry name" value="Pseudouridine synthase I, catalytic domain, N-terminal subdomain"/>
    <property type="match status" value="1"/>
</dbReference>
<dbReference type="HAMAP" id="MF_00171">
    <property type="entry name" value="TruA"/>
    <property type="match status" value="1"/>
</dbReference>
<dbReference type="InterPro" id="IPR020103">
    <property type="entry name" value="PsdUridine_synth_cat_dom_sf"/>
</dbReference>
<dbReference type="InterPro" id="IPR001406">
    <property type="entry name" value="PsdUridine_synth_TruA"/>
</dbReference>
<dbReference type="InterPro" id="IPR020097">
    <property type="entry name" value="PsdUridine_synth_TruA_a/b_dom"/>
</dbReference>
<dbReference type="InterPro" id="IPR020095">
    <property type="entry name" value="PsdUridine_synth_TruA_C"/>
</dbReference>
<dbReference type="InterPro" id="IPR020094">
    <property type="entry name" value="TruA/RsuA/RluB/E/F_N"/>
</dbReference>
<dbReference type="NCBIfam" id="TIGR00071">
    <property type="entry name" value="hisT_truA"/>
    <property type="match status" value="1"/>
</dbReference>
<dbReference type="PANTHER" id="PTHR11142">
    <property type="entry name" value="PSEUDOURIDYLATE SYNTHASE"/>
    <property type="match status" value="1"/>
</dbReference>
<dbReference type="PANTHER" id="PTHR11142:SF0">
    <property type="entry name" value="TRNA PSEUDOURIDINE SYNTHASE-LIKE 1"/>
    <property type="match status" value="1"/>
</dbReference>
<dbReference type="Pfam" id="PF01416">
    <property type="entry name" value="PseudoU_synth_1"/>
    <property type="match status" value="2"/>
</dbReference>
<dbReference type="PIRSF" id="PIRSF001430">
    <property type="entry name" value="tRNA_psdUrid_synth"/>
    <property type="match status" value="1"/>
</dbReference>
<dbReference type="SUPFAM" id="SSF55120">
    <property type="entry name" value="Pseudouridine synthase"/>
    <property type="match status" value="1"/>
</dbReference>
<gene>
    <name evidence="1" type="primary">truA</name>
    <name type="ordered locus">CAB159</name>
</gene>
<keyword id="KW-0413">Isomerase</keyword>
<keyword id="KW-0819">tRNA processing</keyword>
<reference key="1">
    <citation type="journal article" date="2005" name="Genome Res.">
        <title>The Chlamydophila abortus genome sequence reveals an array of variable proteins that contribute to interspecies variation.</title>
        <authorList>
            <person name="Thomson N.R."/>
            <person name="Yeats C."/>
            <person name="Bell K."/>
            <person name="Holden M.T.G."/>
            <person name="Bentley S.D."/>
            <person name="Livingstone M."/>
            <person name="Cerdeno-Tarraga A.-M."/>
            <person name="Harris B."/>
            <person name="Doggett J."/>
            <person name="Ormond D."/>
            <person name="Mungall K."/>
            <person name="Clarke K."/>
            <person name="Feltwell T."/>
            <person name="Hance Z."/>
            <person name="Sanders M."/>
            <person name="Quail M.A."/>
            <person name="Price C."/>
            <person name="Barrell B.G."/>
            <person name="Parkhill J."/>
            <person name="Longbottom D."/>
        </authorList>
    </citation>
    <scope>NUCLEOTIDE SEQUENCE [LARGE SCALE GENOMIC DNA]</scope>
    <source>
        <strain>DSM 27085 / S26/3</strain>
    </source>
</reference>
<comment type="function">
    <text evidence="1">Formation of pseudouridine at positions 38, 39 and 40 in the anticodon stem and loop of transfer RNAs.</text>
</comment>
<comment type="catalytic activity">
    <reaction evidence="1">
        <text>uridine(38/39/40) in tRNA = pseudouridine(38/39/40) in tRNA</text>
        <dbReference type="Rhea" id="RHEA:22376"/>
        <dbReference type="Rhea" id="RHEA-COMP:10085"/>
        <dbReference type="Rhea" id="RHEA-COMP:10087"/>
        <dbReference type="ChEBI" id="CHEBI:65314"/>
        <dbReference type="ChEBI" id="CHEBI:65315"/>
        <dbReference type="EC" id="5.4.99.12"/>
    </reaction>
</comment>
<comment type="subunit">
    <text evidence="1">Homodimer.</text>
</comment>
<comment type="similarity">
    <text evidence="1">Belongs to the tRNA pseudouridine synthase TruA family.</text>
</comment>
<proteinExistence type="inferred from homology"/>
<name>TRUA_CHLAB</name>